<organism>
    <name type="scientific">Listeria monocytogenes serotype 4a (strain HCC23)</name>
    <dbReference type="NCBI Taxonomy" id="552536"/>
    <lineage>
        <taxon>Bacteria</taxon>
        <taxon>Bacillati</taxon>
        <taxon>Bacillota</taxon>
        <taxon>Bacilli</taxon>
        <taxon>Bacillales</taxon>
        <taxon>Listeriaceae</taxon>
        <taxon>Listeria</taxon>
    </lineage>
</organism>
<name>Y668_LISMH</name>
<comment type="similarity">
    <text evidence="1">Belongs to the UPF0398 family.</text>
</comment>
<sequence length="181" mass="20829">MKSIAVTGYKNFELGIFKKDADEAVYIKETIKRHLLPLVEDGLEWVIISGQLGIELWAGDVVAELKEEYPIKLAILEPFEKQSANWNEANQLWANEVLEKADYHAFITKRPYESPAQFAARDGFIIDNTDGALLVYDLEKEGSPKFFYDRALQAKEQANYYLECIDFYALQEVVDDMNQTF</sequence>
<dbReference type="EMBL" id="CP001175">
    <property type="protein sequence ID" value="ACK39023.1"/>
    <property type="molecule type" value="Genomic_DNA"/>
</dbReference>
<dbReference type="RefSeq" id="WP_012581087.1">
    <property type="nucleotide sequence ID" value="NC_011660.1"/>
</dbReference>
<dbReference type="SMR" id="B8DDL4"/>
<dbReference type="KEGG" id="lmh:LMHCC_0668"/>
<dbReference type="HOGENOM" id="CLU_105319_0_0_9"/>
<dbReference type="Gene3D" id="3.40.50.450">
    <property type="match status" value="1"/>
</dbReference>
<dbReference type="HAMAP" id="MF_01575">
    <property type="entry name" value="UPF0398"/>
    <property type="match status" value="1"/>
</dbReference>
<dbReference type="InterPro" id="IPR010697">
    <property type="entry name" value="YspA"/>
</dbReference>
<dbReference type="NCBIfam" id="NF010181">
    <property type="entry name" value="PRK13660.1"/>
    <property type="match status" value="1"/>
</dbReference>
<dbReference type="PANTHER" id="PTHR38440:SF1">
    <property type="entry name" value="UPF0398 PROTEIN SPR0331"/>
    <property type="match status" value="1"/>
</dbReference>
<dbReference type="PANTHER" id="PTHR38440">
    <property type="entry name" value="UPF0398 PROTEIN YPSA"/>
    <property type="match status" value="1"/>
</dbReference>
<dbReference type="Pfam" id="PF06908">
    <property type="entry name" value="YpsA"/>
    <property type="match status" value="1"/>
</dbReference>
<dbReference type="PIRSF" id="PIRSF021290">
    <property type="entry name" value="DUF1273"/>
    <property type="match status" value="1"/>
</dbReference>
<dbReference type="SUPFAM" id="SSF102405">
    <property type="entry name" value="MCP/YpsA-like"/>
    <property type="match status" value="1"/>
</dbReference>
<accession>B8DDL4</accession>
<proteinExistence type="inferred from homology"/>
<evidence type="ECO:0000255" key="1">
    <source>
        <dbReference type="HAMAP-Rule" id="MF_01575"/>
    </source>
</evidence>
<feature type="chain" id="PRO_1000185582" description="UPF0398 protein LMHCC_0668">
    <location>
        <begin position="1"/>
        <end position="181"/>
    </location>
</feature>
<gene>
    <name type="ordered locus">LMHCC_0668</name>
</gene>
<reference key="1">
    <citation type="journal article" date="2011" name="J. Bacteriol.">
        <title>Genome sequence of lineage III Listeria monocytogenes strain HCC23.</title>
        <authorList>
            <person name="Steele C.L."/>
            <person name="Donaldson J.R."/>
            <person name="Paul D."/>
            <person name="Banes M.M."/>
            <person name="Arick T."/>
            <person name="Bridges S.M."/>
            <person name="Lawrence M.L."/>
        </authorList>
    </citation>
    <scope>NUCLEOTIDE SEQUENCE [LARGE SCALE GENOMIC DNA]</scope>
    <source>
        <strain>HCC23</strain>
    </source>
</reference>
<protein>
    <recommendedName>
        <fullName evidence="1">UPF0398 protein LMHCC_0668</fullName>
    </recommendedName>
</protein>